<feature type="chain" id="PRO_0000326577" description="Protein TIC 214">
    <location>
        <begin position="1"/>
        <end position="2057"/>
    </location>
</feature>
<feature type="transmembrane region" description="Helical" evidence="2">
    <location>
        <begin position="13"/>
        <end position="33"/>
    </location>
</feature>
<feature type="transmembrane region" description="Helical" evidence="2">
    <location>
        <begin position="62"/>
        <end position="82"/>
    </location>
</feature>
<feature type="transmembrane region" description="Helical" evidence="2">
    <location>
        <begin position="158"/>
        <end position="178"/>
    </location>
</feature>
<feature type="transmembrane region" description="Helical" evidence="2">
    <location>
        <begin position="206"/>
        <end position="226"/>
    </location>
</feature>
<feature type="region of interest" description="Disordered" evidence="3">
    <location>
        <begin position="288"/>
        <end position="316"/>
    </location>
</feature>
<feature type="region of interest" description="Disordered" evidence="3">
    <location>
        <begin position="614"/>
        <end position="807"/>
    </location>
</feature>
<feature type="region of interest" description="Disordered" evidence="3">
    <location>
        <begin position="890"/>
        <end position="910"/>
    </location>
</feature>
<feature type="region of interest" description="Disordered" evidence="3">
    <location>
        <begin position="1597"/>
        <end position="1634"/>
    </location>
</feature>
<feature type="region of interest" description="Disordered" evidence="3">
    <location>
        <begin position="1724"/>
        <end position="1817"/>
    </location>
</feature>
<feature type="coiled-coil region" evidence="2">
    <location>
        <begin position="248"/>
        <end position="340"/>
    </location>
</feature>
<feature type="compositionally biased region" description="Basic residues" evidence="3">
    <location>
        <begin position="288"/>
        <end position="302"/>
    </location>
</feature>
<feature type="compositionally biased region" description="Basic and acidic residues" evidence="3">
    <location>
        <begin position="621"/>
        <end position="657"/>
    </location>
</feature>
<feature type="compositionally biased region" description="Basic and acidic residues" evidence="3">
    <location>
        <begin position="665"/>
        <end position="702"/>
    </location>
</feature>
<feature type="compositionally biased region" description="Polar residues" evidence="3">
    <location>
        <begin position="704"/>
        <end position="713"/>
    </location>
</feature>
<feature type="compositionally biased region" description="Basic and acidic residues" evidence="3">
    <location>
        <begin position="714"/>
        <end position="807"/>
    </location>
</feature>
<feature type="compositionally biased region" description="Basic and acidic residues" evidence="3">
    <location>
        <begin position="891"/>
        <end position="900"/>
    </location>
</feature>
<feature type="compositionally biased region" description="Acidic residues" evidence="3">
    <location>
        <begin position="1597"/>
        <end position="1619"/>
    </location>
</feature>
<feature type="compositionally biased region" description="Polar residues" evidence="3">
    <location>
        <begin position="1622"/>
        <end position="1634"/>
    </location>
</feature>
<feature type="compositionally biased region" description="Basic and acidic residues" evidence="3">
    <location>
        <begin position="1753"/>
        <end position="1817"/>
    </location>
</feature>
<sequence length="2057" mass="242083">MRNQFPFRSVYYKIINSVLAAGLYYGFLSAFSIKTSHLLLLRTLVFEEEEETKKRIVAKTGLIMGQILLFISIYYKPFHIALTRPRTITALGFFYLFFQIFWKSQKRVFANQNSMSNLSCIFLNHLILQQLLNTCILPSSAARRLVSIYTFRSNNKMLFVTSSFFAWFIGQILVCEFFELAGKHIRIELAGKHIGKNRSIRSIIRSDYFHFFFVILFFMMSLHSFGRIPSPILLPKMSNLSQIEKRALILKGTDEEEENDKIDEEIEQEMEKLEQEIEEIEQQRKLANHLKKKKDRQKKQGTRGHSDKEFHSNSNTSYSKRKIEVLKSEIRVIQEKERKSLISPLLFDYRRWYRPFRYIQNNRLEQAIRNEMSQYFFDTQQSDGKERISFTYPRSLSTFFKVIKRKINILLEKTLSNQLDNAWVSRNKKKMNHLKNDFFNRINHLDKEKIDGEIEQEKEREQKAVEILETRTRLCIEDDTTKQEYYLPQMYDPFLNGPYRGKIKKELPPSIIKNTLIADSRETGEQNRLHDLLLPNSNYENFDQNTNTLEIGDILEIDAFSSIVIHKISKKVPRWSYKLISELEQLSFHYSPPAEHEIRSRRAVGEYLLFDPTETHTTTKATDKETKPNASKETDTVNKETKPNASKETDTIDKETKTNASKETNTVDKETKTNASKETDTVDKETKPNASKETDTIDKETKTNASKETNTVNKETKPNASKETDTVDKETKTNASKETDTVNKETKTNASKETDTVDKETKPNASKETDTVNKETKTNASKETDTVNKETKTKTPEEEAKEDEEKGLVLMRYAHQPDFKHGLIKGSMRTQRRKIVIEKLFQANAHSPLFFDRIKKKKLFSFAIPRPVQLNRIFRNWSAGKGFRILESTDEQTKREEKPKRESKKKNDRVKEKKRLEIGETWDTFEITQMLRGCILIAQSSLRKNLILPSLIIGKNLGRMLLLQIPEWSEDFEEWNREKHIKCTYTGNPVSETEFPENWLTQGIQIKIVYPFHLKPWHTSKPLTSRDDVCFLTIFGRETELPFGSPRKTPSFFEPILKELEKKIGKYEKVTAESVLKKIIIKLFKKVSKETRTTNQNLPFIEKDLSKGKPILLFRSREIGGMEKEKDSRISNQIIDESFSQIQKIQIPDWTNSSLIETKMQDMTDRTSTIKNQIERITEEKKKVTLELDISTYKKSCRLELSKKIWQIVKLKNIICKFHYFRKFFIQRIYNDICLSTIHICQTNTQLFVESTKNLIEKYISKNETNKKIINKKTKNTIHFISNIKTYTYNSCKKNSEIFCDLSNLSQAYVFYKISQTGVVNLSKLRSVLQHHGTSFFLKTQMKDSFRTQGIFQSEVIHKKLQRSITSQWKNWLRGNYQYDLSQIIWSSLMSQKQKWRNRVNRYCRSQKKDLKKWNSCGKYQLSHYKKKKGPNSLSNQKDNFQKCYRYDLLSYKSINNENKGDSVFYRSIPQVTKRQAVSDNYNMSQNSLFAITGSIPINIFIGRIERVYIPYIEKNLNRKYFNWENIYFDLRKKVAIESWVAVNPSSNQKTRIGTNNFQLIDPIDKEEEEEINPSSNQKTPIGTNKDEIFYAIDKEEEEEINPEEEINPEEEINPEEEINPSSNQKTPIGTNNDQLIDPIEKQEKDPFYIPINQNPEINQPNSPNSFFDWMGMNEQILNRPISNLELWFFPEFVRLFNVYKTKPWIIPSKLLLLNSNLSETDNKKKNIAENQNLEEEDSAKSDMKKGTKKSKTNSEKKSKTNSEKKSETDSEKKSETDSEKKSETDSEKKSETDSEKKSETDSEKKSETDSEKKSLSTRELRELFMKKYFLLQLRWDQRNIGQNIRKNVRILALPKSSINLETMTLSCIERRKLQLNVMWKSKSNLSILKFFKSIGMVVDRLGLSVKNNGQFLMYQTIGISLVHKSKNKTNQQYRKQRIIRARENNHFDALVLENILSSRRRRELRILICFNSNNWNDVDTNSVFFNENGVKNCSHFWEERNLRDKEKNELIQFKFFLWPNYRLEDLACMNRYWFDTNNGSRFSILRIHMYLPLKIR</sequence>
<organism>
    <name type="scientific">Ipomoea purpurea</name>
    <name type="common">Common morning glory</name>
    <name type="synonym">Pharbitis purpurea</name>
    <dbReference type="NCBI Taxonomy" id="4121"/>
    <lineage>
        <taxon>Eukaryota</taxon>
        <taxon>Viridiplantae</taxon>
        <taxon>Streptophyta</taxon>
        <taxon>Embryophyta</taxon>
        <taxon>Tracheophyta</taxon>
        <taxon>Spermatophyta</taxon>
        <taxon>Magnoliopsida</taxon>
        <taxon>eudicotyledons</taxon>
        <taxon>Gunneridae</taxon>
        <taxon>Pentapetalae</taxon>
        <taxon>asterids</taxon>
        <taxon>lamiids</taxon>
        <taxon>Solanales</taxon>
        <taxon>Convolvulaceae</taxon>
        <taxon>Ipomoeeae</taxon>
        <taxon>Ipomoea</taxon>
    </lineage>
</organism>
<evidence type="ECO:0000250" key="1">
    <source>
        <dbReference type="UniProtKB" id="P56785"/>
    </source>
</evidence>
<evidence type="ECO:0000255" key="2"/>
<evidence type="ECO:0000256" key="3">
    <source>
        <dbReference type="SAM" id="MobiDB-lite"/>
    </source>
</evidence>
<evidence type="ECO:0000305" key="4"/>
<gene>
    <name evidence="1" type="primary">TIC214</name>
    <name type="synonym">ycf1-A</name>
</gene>
<gene>
    <name evidence="1" type="primary">TIC214</name>
    <name type="synonym">ycf1-B</name>
</gene>
<dbReference type="EMBL" id="EU118126">
    <property type="protein sequence ID" value="ABV02395.1"/>
    <property type="molecule type" value="Genomic_DNA"/>
</dbReference>
<dbReference type="EMBL" id="EU118126">
    <property type="protein sequence ID" value="ABV02409.1"/>
    <property type="molecule type" value="Genomic_DNA"/>
</dbReference>
<dbReference type="GO" id="GO:0009706">
    <property type="term" value="C:chloroplast inner membrane"/>
    <property type="evidence" value="ECO:0007669"/>
    <property type="project" value="UniProtKB-SubCell"/>
</dbReference>
<dbReference type="GO" id="GO:0015031">
    <property type="term" value="P:protein transport"/>
    <property type="evidence" value="ECO:0007669"/>
    <property type="project" value="UniProtKB-KW"/>
</dbReference>
<dbReference type="InterPro" id="IPR008896">
    <property type="entry name" value="TIC214"/>
</dbReference>
<dbReference type="PANTHER" id="PTHR33163:SF40">
    <property type="entry name" value="PROTEIN TIC 214"/>
    <property type="match status" value="1"/>
</dbReference>
<dbReference type="PANTHER" id="PTHR33163">
    <property type="entry name" value="PROTEIN TIC 214-RELATED"/>
    <property type="match status" value="1"/>
</dbReference>
<dbReference type="Pfam" id="PF05758">
    <property type="entry name" value="Ycf1"/>
    <property type="match status" value="3"/>
</dbReference>
<comment type="function">
    <text evidence="1">Involved in protein precursor import into chloroplasts. May be part of an intermediate translocation complex acting as a protein-conducting channel at the inner envelope.</text>
</comment>
<comment type="subunit">
    <text evidence="1">Part of the Tic complex.</text>
</comment>
<comment type="subcellular location">
    <subcellularLocation>
        <location evidence="1">Plastid</location>
        <location evidence="1">Chloroplast inner membrane</location>
        <topology evidence="2">Multi-pass membrane protein</topology>
    </subcellularLocation>
</comment>
<comment type="similarity">
    <text evidence="4">Belongs to the TIC214 family.</text>
</comment>
<accession>A7Y3K2</accession>
<keyword id="KW-0150">Chloroplast</keyword>
<keyword id="KW-0175">Coiled coil</keyword>
<keyword id="KW-0472">Membrane</keyword>
<keyword id="KW-0934">Plastid</keyword>
<keyword id="KW-1001">Plastid inner membrane</keyword>
<keyword id="KW-0653">Protein transport</keyword>
<keyword id="KW-0812">Transmembrane</keyword>
<keyword id="KW-1133">Transmembrane helix</keyword>
<keyword id="KW-0813">Transport</keyword>
<proteinExistence type="inferred from homology"/>
<name>TI214_IPOPU</name>
<reference key="1">
    <citation type="journal article" date="2007" name="BMC Plant Biol.">
        <title>Complete plastid genome sequences suggest strong selection for retention of photosynthetic genes in the parasitic plant genus Cuscuta.</title>
        <authorList>
            <person name="McNeal J.R."/>
            <person name="Kuehl J.V."/>
            <person name="Boore J.L."/>
            <person name="dePamphilis C.W."/>
        </authorList>
    </citation>
    <scope>NUCLEOTIDE SEQUENCE [LARGE SCALE GENOMIC DNA]</scope>
</reference>
<protein>
    <recommendedName>
        <fullName evidence="1">Protein TIC 214</fullName>
    </recommendedName>
    <alternativeName>
        <fullName evidence="1">Translocon at the inner envelope membrane of chloroplasts 214</fullName>
        <shortName evidence="1">AtTIC214</shortName>
    </alternativeName>
</protein>
<geneLocation type="chloroplast"/>